<sequence length="294" mass="31383">MSDILTRVISENGKTFGIACDTTALVNEACRKHDVGPLAAVALGRALTGSILMGALLKGDQYLQLKFEGNGPLGKIITEASPDGWCRGYIANPHAELPLLNGRLDVAGGVGHAGLLSVTKDIGMKQKYQGTSHLVSSEIGEDIAYYLTTSEQVPSAVGLGIQLNPNGTIDAAGGFLIQSLPPADEELIASMEEVIANLPSISSMILDGQSPRQMLDKLFGAIPHKETGNSKLKYQCSCSREKMENALISLGAADLASLLTERGEAEVLCEFCRQNYHFAGKDLQEIIDRLKNIQ</sequence>
<dbReference type="EMBL" id="CR522870">
    <property type="protein sequence ID" value="CAG35289.1"/>
    <property type="molecule type" value="Genomic_DNA"/>
</dbReference>
<dbReference type="RefSeq" id="WP_011187805.1">
    <property type="nucleotide sequence ID" value="NC_006138.1"/>
</dbReference>
<dbReference type="SMR" id="Q6AQT4"/>
<dbReference type="STRING" id="177439.DP0560"/>
<dbReference type="KEGG" id="dps:DP0560"/>
<dbReference type="eggNOG" id="COG1281">
    <property type="taxonomic scope" value="Bacteria"/>
</dbReference>
<dbReference type="HOGENOM" id="CLU_054493_1_0_7"/>
<dbReference type="OrthoDB" id="9793753at2"/>
<dbReference type="Proteomes" id="UP000000602">
    <property type="component" value="Chromosome"/>
</dbReference>
<dbReference type="GO" id="GO:0005737">
    <property type="term" value="C:cytoplasm"/>
    <property type="evidence" value="ECO:0007669"/>
    <property type="project" value="UniProtKB-SubCell"/>
</dbReference>
<dbReference type="GO" id="GO:0044183">
    <property type="term" value="F:protein folding chaperone"/>
    <property type="evidence" value="ECO:0007669"/>
    <property type="project" value="TreeGrafter"/>
</dbReference>
<dbReference type="GO" id="GO:0051082">
    <property type="term" value="F:unfolded protein binding"/>
    <property type="evidence" value="ECO:0007669"/>
    <property type="project" value="UniProtKB-UniRule"/>
</dbReference>
<dbReference type="GO" id="GO:0042026">
    <property type="term" value="P:protein refolding"/>
    <property type="evidence" value="ECO:0007669"/>
    <property type="project" value="TreeGrafter"/>
</dbReference>
<dbReference type="CDD" id="cd00498">
    <property type="entry name" value="Hsp33"/>
    <property type="match status" value="1"/>
</dbReference>
<dbReference type="Gene3D" id="3.55.30.10">
    <property type="entry name" value="Hsp33 domain"/>
    <property type="match status" value="1"/>
</dbReference>
<dbReference type="Gene3D" id="3.90.1280.10">
    <property type="entry name" value="HSP33 redox switch-like"/>
    <property type="match status" value="1"/>
</dbReference>
<dbReference type="HAMAP" id="MF_00117">
    <property type="entry name" value="HslO"/>
    <property type="match status" value="1"/>
</dbReference>
<dbReference type="InterPro" id="IPR000397">
    <property type="entry name" value="Heat_shock_Hsp33"/>
</dbReference>
<dbReference type="InterPro" id="IPR016154">
    <property type="entry name" value="Heat_shock_Hsp33_C"/>
</dbReference>
<dbReference type="InterPro" id="IPR016153">
    <property type="entry name" value="Heat_shock_Hsp33_N"/>
</dbReference>
<dbReference type="NCBIfam" id="NF001033">
    <property type="entry name" value="PRK00114.1"/>
    <property type="match status" value="1"/>
</dbReference>
<dbReference type="PANTHER" id="PTHR30111">
    <property type="entry name" value="33 KDA CHAPERONIN"/>
    <property type="match status" value="1"/>
</dbReference>
<dbReference type="PANTHER" id="PTHR30111:SF1">
    <property type="entry name" value="33 KDA CHAPERONIN"/>
    <property type="match status" value="1"/>
</dbReference>
<dbReference type="Pfam" id="PF01430">
    <property type="entry name" value="HSP33"/>
    <property type="match status" value="1"/>
</dbReference>
<dbReference type="PIRSF" id="PIRSF005261">
    <property type="entry name" value="Heat_shock_Hsp33"/>
    <property type="match status" value="1"/>
</dbReference>
<dbReference type="SUPFAM" id="SSF64397">
    <property type="entry name" value="Hsp33 domain"/>
    <property type="match status" value="1"/>
</dbReference>
<dbReference type="SUPFAM" id="SSF118352">
    <property type="entry name" value="HSP33 redox switch-like"/>
    <property type="match status" value="1"/>
</dbReference>
<gene>
    <name evidence="1" type="primary">hslO</name>
    <name type="ordered locus">DP0560</name>
</gene>
<feature type="chain" id="PRO_0000238065" description="33 kDa chaperonin">
    <location>
        <begin position="1"/>
        <end position="294"/>
    </location>
</feature>
<feature type="disulfide bond" description="Redox-active" evidence="1">
    <location>
        <begin position="236"/>
        <end position="238"/>
    </location>
</feature>
<feature type="disulfide bond" description="Redox-active" evidence="1">
    <location>
        <begin position="269"/>
        <end position="272"/>
    </location>
</feature>
<comment type="function">
    <text evidence="1">Redox regulated molecular chaperone. Protects both thermally unfolding and oxidatively damaged proteins from irreversible aggregation. Plays an important role in the bacterial defense system toward oxidative stress.</text>
</comment>
<comment type="subcellular location">
    <subcellularLocation>
        <location evidence="1">Cytoplasm</location>
    </subcellularLocation>
</comment>
<comment type="PTM">
    <text evidence="1">Under oxidizing conditions two disulfide bonds are formed involving the reactive cysteines. Under reducing conditions zinc is bound to the reactive cysteines and the protein is inactive.</text>
</comment>
<comment type="similarity">
    <text evidence="1">Belongs to the HSP33 family.</text>
</comment>
<proteinExistence type="inferred from homology"/>
<accession>Q6AQT4</accession>
<evidence type="ECO:0000255" key="1">
    <source>
        <dbReference type="HAMAP-Rule" id="MF_00117"/>
    </source>
</evidence>
<reference key="1">
    <citation type="journal article" date="2004" name="Environ. Microbiol.">
        <title>The genome of Desulfotalea psychrophila, a sulfate-reducing bacterium from permanently cold Arctic sediments.</title>
        <authorList>
            <person name="Rabus R."/>
            <person name="Ruepp A."/>
            <person name="Frickey T."/>
            <person name="Rattei T."/>
            <person name="Fartmann B."/>
            <person name="Stark M."/>
            <person name="Bauer M."/>
            <person name="Zibat A."/>
            <person name="Lombardot T."/>
            <person name="Becker I."/>
            <person name="Amann J."/>
            <person name="Gellner K."/>
            <person name="Teeling H."/>
            <person name="Leuschner W.D."/>
            <person name="Gloeckner F.-O."/>
            <person name="Lupas A.N."/>
            <person name="Amann R."/>
            <person name="Klenk H.-P."/>
        </authorList>
    </citation>
    <scope>NUCLEOTIDE SEQUENCE [LARGE SCALE GENOMIC DNA]</scope>
    <source>
        <strain>DSM 12343 / LSv54</strain>
    </source>
</reference>
<name>HSLO_DESPS</name>
<organism>
    <name type="scientific">Desulfotalea psychrophila (strain LSv54 / DSM 12343)</name>
    <dbReference type="NCBI Taxonomy" id="177439"/>
    <lineage>
        <taxon>Bacteria</taxon>
        <taxon>Pseudomonadati</taxon>
        <taxon>Thermodesulfobacteriota</taxon>
        <taxon>Desulfobulbia</taxon>
        <taxon>Desulfobulbales</taxon>
        <taxon>Desulfocapsaceae</taxon>
        <taxon>Desulfotalea</taxon>
    </lineage>
</organism>
<protein>
    <recommendedName>
        <fullName evidence="1">33 kDa chaperonin</fullName>
    </recommendedName>
    <alternativeName>
        <fullName evidence="1">Heat shock protein 33 homolog</fullName>
        <shortName evidence="1">HSP33</shortName>
    </alternativeName>
</protein>
<keyword id="KW-0143">Chaperone</keyword>
<keyword id="KW-0963">Cytoplasm</keyword>
<keyword id="KW-1015">Disulfide bond</keyword>
<keyword id="KW-0676">Redox-active center</keyword>
<keyword id="KW-1185">Reference proteome</keyword>
<keyword id="KW-0862">Zinc</keyword>